<protein>
    <recommendedName>
        <fullName evidence="1">Nucleoid-associated protein PputW619_4243</fullName>
    </recommendedName>
</protein>
<reference key="1">
    <citation type="submission" date="2008-02" db="EMBL/GenBank/DDBJ databases">
        <title>Complete sequence of Pseudomonas putida W619.</title>
        <authorList>
            <person name="Copeland A."/>
            <person name="Lucas S."/>
            <person name="Lapidus A."/>
            <person name="Barry K."/>
            <person name="Detter J.C."/>
            <person name="Glavina del Rio T."/>
            <person name="Dalin E."/>
            <person name="Tice H."/>
            <person name="Pitluck S."/>
            <person name="Chain P."/>
            <person name="Malfatti S."/>
            <person name="Shin M."/>
            <person name="Vergez L."/>
            <person name="Schmutz J."/>
            <person name="Larimer F."/>
            <person name="Land M."/>
            <person name="Hauser L."/>
            <person name="Kyrpides N."/>
            <person name="Kim E."/>
            <person name="Taghavi S."/>
            <person name="Vangronsveld D."/>
            <person name="van der Lelie D."/>
            <person name="Richardson P."/>
        </authorList>
    </citation>
    <scope>NUCLEOTIDE SEQUENCE [LARGE SCALE GENOMIC DNA]</scope>
    <source>
        <strain>W619</strain>
    </source>
</reference>
<proteinExistence type="inferred from homology"/>
<name>NDPA_PSEPW</name>
<dbReference type="EMBL" id="CP000949">
    <property type="protein sequence ID" value="ACA74723.1"/>
    <property type="molecule type" value="Genomic_DNA"/>
</dbReference>
<dbReference type="SMR" id="B1JBB5"/>
<dbReference type="STRING" id="390235.PputW619_4243"/>
<dbReference type="KEGG" id="ppw:PputW619_4243"/>
<dbReference type="eggNOG" id="COG3081">
    <property type="taxonomic scope" value="Bacteria"/>
</dbReference>
<dbReference type="HOGENOM" id="CLU_063050_0_1_6"/>
<dbReference type="OrthoDB" id="9131762at2"/>
<dbReference type="GO" id="GO:0043590">
    <property type="term" value="C:bacterial nucleoid"/>
    <property type="evidence" value="ECO:0007669"/>
    <property type="project" value="TreeGrafter"/>
</dbReference>
<dbReference type="GO" id="GO:0005737">
    <property type="term" value="C:cytoplasm"/>
    <property type="evidence" value="ECO:0007669"/>
    <property type="project" value="UniProtKB-UniRule"/>
</dbReference>
<dbReference type="GO" id="GO:0003690">
    <property type="term" value="F:double-stranded DNA binding"/>
    <property type="evidence" value="ECO:0007669"/>
    <property type="project" value="TreeGrafter"/>
</dbReference>
<dbReference type="GO" id="GO:0003727">
    <property type="term" value="F:single-stranded RNA binding"/>
    <property type="evidence" value="ECO:0007669"/>
    <property type="project" value="TreeGrafter"/>
</dbReference>
<dbReference type="HAMAP" id="MF_00730">
    <property type="entry name" value="NdpA"/>
    <property type="match status" value="1"/>
</dbReference>
<dbReference type="InterPro" id="IPR007358">
    <property type="entry name" value="Nucleoid_associated_NdpA"/>
</dbReference>
<dbReference type="NCBIfam" id="NF001557">
    <property type="entry name" value="PRK00378.1"/>
    <property type="match status" value="1"/>
</dbReference>
<dbReference type="PANTHER" id="PTHR38772">
    <property type="match status" value="1"/>
</dbReference>
<dbReference type="PANTHER" id="PTHR38772:SF1">
    <property type="entry name" value="NUCLEOID-ASSOCIATED PROTEIN YEJK"/>
    <property type="match status" value="1"/>
</dbReference>
<dbReference type="Pfam" id="PF04245">
    <property type="entry name" value="NA37"/>
    <property type="match status" value="1"/>
</dbReference>
<accession>B1JBB5</accession>
<comment type="subcellular location">
    <subcellularLocation>
        <location evidence="1">Cytoplasm</location>
        <location evidence="1">Nucleoid</location>
    </subcellularLocation>
</comment>
<comment type="similarity">
    <text evidence="1">Belongs to the YejK family.</text>
</comment>
<evidence type="ECO:0000255" key="1">
    <source>
        <dbReference type="HAMAP-Rule" id="MF_00730"/>
    </source>
</evidence>
<feature type="chain" id="PRO_1000132726" description="Nucleoid-associated protein PputW619_4243">
    <location>
        <begin position="1"/>
        <end position="335"/>
    </location>
</feature>
<keyword id="KW-0963">Cytoplasm</keyword>
<gene>
    <name type="ordered locus">PputW619_4243</name>
</gene>
<organism>
    <name type="scientific">Pseudomonas putida (strain W619)</name>
    <dbReference type="NCBI Taxonomy" id="390235"/>
    <lineage>
        <taxon>Bacteria</taxon>
        <taxon>Pseudomonadati</taxon>
        <taxon>Pseudomonadota</taxon>
        <taxon>Gammaproteobacteria</taxon>
        <taxon>Pseudomonadales</taxon>
        <taxon>Pseudomonadaceae</taxon>
        <taxon>Pseudomonas</taxon>
    </lineage>
</organism>
<sequence>MPIRHCIVHLIDKKPDGSPAVLHARDTELGASDAIENLLADLNDSYNAKQGKAWGFFHGESGAYPLSGWLKQYLEQEKDFAAFSRVAVEHLQKLMEESNLSTGGHILFAHYQQGMTDYLAIALLHHSEGVAVNAELDVTPSRHLDLGQLHLAARINLSEWKNNQNSKQYISFIKGKNGKKVSDYFRDFIGCQEGVDGPGETRTLLKAFSDFVESEDLPEEAAREKTQTLVDYATTQTKLGEPVTLEELSSLIDEDRPKAFYDHIRNKDYGLSPEIPADKRTLNQFRRFTGRAEGLSISFEAHLLGDKVEYDEVAGTLIIKGLPTQLVDQLKRRKD</sequence>